<feature type="chain" id="PRO_0000395786" description="Lon protease homolog 2, peroxisomal">
    <location>
        <begin position="1"/>
        <end position="884"/>
    </location>
</feature>
<feature type="domain" description="Lon N-terminal" evidence="3">
    <location>
        <begin position="12"/>
        <end position="255"/>
    </location>
</feature>
<feature type="domain" description="Lon proteolytic" evidence="2">
    <location>
        <begin position="689"/>
        <end position="874"/>
    </location>
</feature>
<feature type="region of interest" description="Disordered" evidence="4">
    <location>
        <begin position="67"/>
        <end position="101"/>
    </location>
</feature>
<feature type="short sequence motif" description="Microbody targeting signal" evidence="1">
    <location>
        <begin position="882"/>
        <end position="884"/>
    </location>
</feature>
<feature type="compositionally biased region" description="Gly residues" evidence="4">
    <location>
        <begin position="75"/>
        <end position="89"/>
    </location>
</feature>
<feature type="active site" evidence="1">
    <location>
        <position position="780"/>
    </location>
</feature>
<feature type="active site" evidence="1">
    <location>
        <position position="823"/>
    </location>
</feature>
<feature type="binding site" evidence="1">
    <location>
        <begin position="408"/>
        <end position="415"/>
    </location>
    <ligand>
        <name>ATP</name>
        <dbReference type="ChEBI" id="CHEBI:30616"/>
    </ligand>
</feature>
<feature type="sequence conflict" description="In Ref. 1; AAM95459." evidence="6" ref="1">
    <original>N</original>
    <variation>D</variation>
    <location>
        <position position="426"/>
    </location>
</feature>
<sequence>MADAAVELPGRLAILPFRNKVLLPGAIVRIRCTNPSSVKLVEQELWQREEKGLIGVLPVHDSEAAGSLLSPGVGSDSGEGGSKAPGGSAGESTKQDTKNGKETIHWHSRGVAARALHLSRGVEKPSGRVTYIVVLEGLCRFSVQELSARGSYHVARVSRLDMTKTELEHAEQDPDLIALSRQFKATAMELISVLEQKQKTVGRTKVLLETVPVYRLADIFVASFEISFEEQLSMLDSVDLKVRLSKATELVDRHLQSILVAEKITQKVEGQLSKSQKEFLLRQQMRAIKEELGDNDDDEDDVAALERKMQNAGMPANIWKHAQRELRRLRKMQPQQPGYSSSRTYLELLAELPWQKVSEERELDLRAAKESLDRDHYGLTKVKQRIIEYLAVRKLKPDARGPVLCFVGPPGVGKTSLASSIAKALNRKFIRISLGGVKDEADIRGHRRTYIGSMPGRLIDGLKRVSVSNPVMLLDEIDKTGSDVRGDPASALLEVLDPEQNKTFNDHYLNVPFDLSKVIFVATANRMQPIPPPLLDRMEVIELPGYTPEEKLKIAMKHLIPRVLEQHGLSSTYLQIPEAMVRLIIERYTREAGVRNLERNLAALARAAAVKVAEQDSVLRLGKEIQPITTTLLDSRLADGGEVEMEVIPMGQDISNTYENPSPMIVDEAMLEKVLGPPRFDDSEAADRVASPGVSVGLVWTSFGGEVQFVEATAMVGKGDLHLTGQLGDVIKESAQLALTWVRARAADLNLSPTSDINLLESRDIHIHFPAGAVPKDGPSAGVTLVTSLVSLFSHRKVRADTAMTGEMTLRGLVLPVGGVKDKVLAAHRYGIKRVILPERNMKDLAEVPAPILSGLEILLVKRIEEVLDHAFEGGCPLRPHSKL</sequence>
<keyword id="KW-0067">ATP-binding</keyword>
<keyword id="KW-0378">Hydrolase</keyword>
<keyword id="KW-0547">Nucleotide-binding</keyword>
<keyword id="KW-0576">Peroxisome</keyword>
<keyword id="KW-0645">Protease</keyword>
<keyword id="KW-1185">Reference proteome</keyword>
<keyword id="KW-0720">Serine protease</keyword>
<name>LONP2_ORYSI</name>
<evidence type="ECO:0000255" key="1">
    <source>
        <dbReference type="HAMAP-Rule" id="MF_03121"/>
    </source>
</evidence>
<evidence type="ECO:0000255" key="2">
    <source>
        <dbReference type="PROSITE-ProRule" id="PRU01122"/>
    </source>
</evidence>
<evidence type="ECO:0000255" key="3">
    <source>
        <dbReference type="PROSITE-ProRule" id="PRU01123"/>
    </source>
</evidence>
<evidence type="ECO:0000256" key="4">
    <source>
        <dbReference type="SAM" id="MobiDB-lite"/>
    </source>
</evidence>
<evidence type="ECO:0000269" key="5">
    <source>
    </source>
</evidence>
<evidence type="ECO:0000305" key="6"/>
<comment type="function">
    <text evidence="1">ATP-dependent serine protease that mediates the selective degradation of misfolded and unassembled polypeptides in the peroxisomal matrix. Necessary for type 2 peroxisome targeting signal (PTS2)-containing protein processing and facilitates peroxisome matrix protein import.</text>
</comment>
<comment type="catalytic activity">
    <reaction evidence="1">
        <text>Hydrolysis of proteins in presence of ATP.</text>
        <dbReference type="EC" id="3.4.21.53"/>
    </reaction>
</comment>
<comment type="subcellular location">
    <subcellularLocation>
        <location evidence="1">Peroxisome matrix</location>
    </subcellularLocation>
</comment>
<comment type="tissue specificity">
    <text evidence="5">Expressed in roots, leaves and panicles.</text>
</comment>
<comment type="similarity">
    <text evidence="1">Belongs to the peptidase S16 family.</text>
</comment>
<gene>
    <name type="primary">LON1</name>
    <name type="ORF">OsI_32159</name>
</gene>
<protein>
    <recommendedName>
        <fullName evidence="1">Lon protease homolog 2, peroxisomal</fullName>
        <ecNumber evidence="1">3.4.21.53</ecNumber>
    </recommendedName>
</protein>
<organism>
    <name type="scientific">Oryza sativa subsp. indica</name>
    <name type="common">Rice</name>
    <dbReference type="NCBI Taxonomy" id="39946"/>
    <lineage>
        <taxon>Eukaryota</taxon>
        <taxon>Viridiplantae</taxon>
        <taxon>Streptophyta</taxon>
        <taxon>Embryophyta</taxon>
        <taxon>Tracheophyta</taxon>
        <taxon>Spermatophyta</taxon>
        <taxon>Magnoliopsida</taxon>
        <taxon>Liliopsida</taxon>
        <taxon>Poales</taxon>
        <taxon>Poaceae</taxon>
        <taxon>BOP clade</taxon>
        <taxon>Oryzoideae</taxon>
        <taxon>Oryzeae</taxon>
        <taxon>Oryzinae</taxon>
        <taxon>Oryza</taxon>
        <taxon>Oryza sativa</taxon>
    </lineage>
</organism>
<dbReference type="EC" id="3.4.21.53" evidence="1"/>
<dbReference type="EMBL" id="AY129070">
    <property type="protein sequence ID" value="AAM95459.1"/>
    <property type="molecule type" value="mRNA"/>
</dbReference>
<dbReference type="EMBL" id="CM000134">
    <property type="protein sequence ID" value="EEC84943.1"/>
    <property type="molecule type" value="Genomic_DNA"/>
</dbReference>
<dbReference type="SMR" id="B8BDV1"/>
<dbReference type="STRING" id="39946.B8BDV1"/>
<dbReference type="MEROPS" id="S16.003"/>
<dbReference type="EnsemblPlants" id="BGIOSGA029377-TA">
    <property type="protein sequence ID" value="BGIOSGA029377-PA"/>
    <property type="gene ID" value="BGIOSGA029377"/>
</dbReference>
<dbReference type="EnsemblPlants" id="OsKYG_09g0017500.02">
    <property type="protein sequence ID" value="OsKYG_09g0017500.02"/>
    <property type="gene ID" value="OsKYG_09g0017500"/>
</dbReference>
<dbReference type="EnsemblPlants" id="OsLaMu_09g0017580.01">
    <property type="protein sequence ID" value="OsLaMu_09g0017580.01"/>
    <property type="gene ID" value="OsLaMu_09g0017580"/>
</dbReference>
<dbReference type="EnsemblPlants" id="OsLima_09g0017720.02">
    <property type="protein sequence ID" value="OsLima_09g0017720.02"/>
    <property type="gene ID" value="OsLima_09g0017720"/>
</dbReference>
<dbReference type="EnsemblPlants" id="OsZS97_09G017680_01">
    <property type="protein sequence ID" value="OsZS97_09G017680_01"/>
    <property type="gene ID" value="OsZS97_09G017680"/>
</dbReference>
<dbReference type="Gramene" id="BGIOSGA029377-TA">
    <property type="protein sequence ID" value="BGIOSGA029377-PA"/>
    <property type="gene ID" value="BGIOSGA029377"/>
</dbReference>
<dbReference type="Gramene" id="OsKYG_09g0017500.02">
    <property type="protein sequence ID" value="OsKYG_09g0017500.02"/>
    <property type="gene ID" value="OsKYG_09g0017500"/>
</dbReference>
<dbReference type="Gramene" id="OsLaMu_09g0017580.01">
    <property type="protein sequence ID" value="OsLaMu_09g0017580.01"/>
    <property type="gene ID" value="OsLaMu_09g0017580"/>
</dbReference>
<dbReference type="Gramene" id="OsLima_09g0017720.02">
    <property type="protein sequence ID" value="OsLima_09g0017720.02"/>
    <property type="gene ID" value="OsLima_09g0017720"/>
</dbReference>
<dbReference type="Gramene" id="OsZS97_09G017680_01">
    <property type="protein sequence ID" value="OsZS97_09G017680_01"/>
    <property type="gene ID" value="OsZS97_09G017680"/>
</dbReference>
<dbReference type="HOGENOM" id="CLU_004109_4_0_1"/>
<dbReference type="OMA" id="EYFLHQQ"/>
<dbReference type="Proteomes" id="UP000007015">
    <property type="component" value="Chromosome 9"/>
</dbReference>
<dbReference type="GO" id="GO:0005782">
    <property type="term" value="C:peroxisomal matrix"/>
    <property type="evidence" value="ECO:0007669"/>
    <property type="project" value="UniProtKB-SubCell"/>
</dbReference>
<dbReference type="GO" id="GO:0005524">
    <property type="term" value="F:ATP binding"/>
    <property type="evidence" value="ECO:0007669"/>
    <property type="project" value="UniProtKB-UniRule"/>
</dbReference>
<dbReference type="GO" id="GO:0016887">
    <property type="term" value="F:ATP hydrolysis activity"/>
    <property type="evidence" value="ECO:0007669"/>
    <property type="project" value="UniProtKB-UniRule"/>
</dbReference>
<dbReference type="GO" id="GO:0004176">
    <property type="term" value="F:ATP-dependent peptidase activity"/>
    <property type="evidence" value="ECO:0007669"/>
    <property type="project" value="UniProtKB-UniRule"/>
</dbReference>
<dbReference type="GO" id="GO:0004252">
    <property type="term" value="F:serine-type endopeptidase activity"/>
    <property type="evidence" value="ECO:0007669"/>
    <property type="project" value="UniProtKB-UniRule"/>
</dbReference>
<dbReference type="GO" id="GO:0048527">
    <property type="term" value="P:lateral root development"/>
    <property type="evidence" value="ECO:0007669"/>
    <property type="project" value="EnsemblPlants"/>
</dbReference>
<dbReference type="GO" id="GO:0016560">
    <property type="term" value="P:protein import into peroxisome matrix, docking"/>
    <property type="evidence" value="ECO:0007669"/>
    <property type="project" value="EnsemblPlants"/>
</dbReference>
<dbReference type="GO" id="GO:0016485">
    <property type="term" value="P:protein processing"/>
    <property type="evidence" value="ECO:0007669"/>
    <property type="project" value="UniProtKB-UniRule"/>
</dbReference>
<dbReference type="GO" id="GO:0006515">
    <property type="term" value="P:protein quality control for misfolded or incompletely synthesized proteins"/>
    <property type="evidence" value="ECO:0007669"/>
    <property type="project" value="UniProtKB-UniRule"/>
</dbReference>
<dbReference type="CDD" id="cd19500">
    <property type="entry name" value="RecA-like_Lon"/>
    <property type="match status" value="1"/>
</dbReference>
<dbReference type="FunFam" id="1.20.5.5270:FF:000002">
    <property type="entry name" value="Lon protease homolog"/>
    <property type="match status" value="1"/>
</dbReference>
<dbReference type="FunFam" id="1.10.8.60:FF:000095">
    <property type="entry name" value="Lon protease homolog 2, peroxisomal"/>
    <property type="match status" value="1"/>
</dbReference>
<dbReference type="FunFam" id="1.20.58.1480:FF:000005">
    <property type="entry name" value="Lon protease homolog 2, peroxisomal"/>
    <property type="match status" value="1"/>
</dbReference>
<dbReference type="FunFam" id="3.30.230.10:FF:000019">
    <property type="entry name" value="Lon protease homolog 2, peroxisomal"/>
    <property type="match status" value="1"/>
</dbReference>
<dbReference type="FunFam" id="3.40.50.300:FF:000651">
    <property type="entry name" value="Lon protease homolog 2, peroxisomal"/>
    <property type="match status" value="1"/>
</dbReference>
<dbReference type="Gene3D" id="1.10.8.60">
    <property type="match status" value="1"/>
</dbReference>
<dbReference type="Gene3D" id="1.20.5.5270">
    <property type="match status" value="1"/>
</dbReference>
<dbReference type="Gene3D" id="1.20.58.1480">
    <property type="match status" value="1"/>
</dbReference>
<dbReference type="Gene3D" id="3.30.230.10">
    <property type="match status" value="1"/>
</dbReference>
<dbReference type="Gene3D" id="2.30.130.40">
    <property type="entry name" value="LON domain-like"/>
    <property type="match status" value="1"/>
</dbReference>
<dbReference type="Gene3D" id="3.40.50.300">
    <property type="entry name" value="P-loop containing nucleotide triphosphate hydrolases"/>
    <property type="match status" value="1"/>
</dbReference>
<dbReference type="HAMAP" id="MF_03121">
    <property type="entry name" value="lonp2_euk"/>
    <property type="match status" value="1"/>
</dbReference>
<dbReference type="InterPro" id="IPR003593">
    <property type="entry name" value="AAA+_ATPase"/>
</dbReference>
<dbReference type="InterPro" id="IPR003959">
    <property type="entry name" value="ATPase_AAA_core"/>
</dbReference>
<dbReference type="InterPro" id="IPR004815">
    <property type="entry name" value="Lon_bac/euk-typ"/>
</dbReference>
<dbReference type="InterPro" id="IPR054594">
    <property type="entry name" value="Lon_lid"/>
</dbReference>
<dbReference type="InterPro" id="IPR008269">
    <property type="entry name" value="Lon_proteolytic"/>
</dbReference>
<dbReference type="InterPro" id="IPR027065">
    <property type="entry name" value="Lon_Prtase"/>
</dbReference>
<dbReference type="InterPro" id="IPR003111">
    <property type="entry name" value="Lon_prtase_N"/>
</dbReference>
<dbReference type="InterPro" id="IPR046336">
    <property type="entry name" value="Lon_prtase_N_sf"/>
</dbReference>
<dbReference type="InterPro" id="IPR027501">
    <property type="entry name" value="Lonp2_euk"/>
</dbReference>
<dbReference type="InterPro" id="IPR027417">
    <property type="entry name" value="P-loop_NTPase"/>
</dbReference>
<dbReference type="InterPro" id="IPR008268">
    <property type="entry name" value="Peptidase_S16_AS"/>
</dbReference>
<dbReference type="InterPro" id="IPR015947">
    <property type="entry name" value="PUA-like_sf"/>
</dbReference>
<dbReference type="InterPro" id="IPR020568">
    <property type="entry name" value="Ribosomal_Su5_D2-typ_SF"/>
</dbReference>
<dbReference type="InterPro" id="IPR014721">
    <property type="entry name" value="Ribsml_uS5_D2-typ_fold_subgr"/>
</dbReference>
<dbReference type="NCBIfam" id="TIGR00763">
    <property type="entry name" value="lon"/>
    <property type="match status" value="1"/>
</dbReference>
<dbReference type="PANTHER" id="PTHR10046">
    <property type="entry name" value="ATP DEPENDENT LON PROTEASE FAMILY MEMBER"/>
    <property type="match status" value="1"/>
</dbReference>
<dbReference type="Pfam" id="PF00004">
    <property type="entry name" value="AAA"/>
    <property type="match status" value="1"/>
</dbReference>
<dbReference type="Pfam" id="PF05362">
    <property type="entry name" value="Lon_C"/>
    <property type="match status" value="1"/>
</dbReference>
<dbReference type="Pfam" id="PF22667">
    <property type="entry name" value="Lon_lid"/>
    <property type="match status" value="1"/>
</dbReference>
<dbReference type="Pfam" id="PF02190">
    <property type="entry name" value="LON_substr_bdg"/>
    <property type="match status" value="1"/>
</dbReference>
<dbReference type="PIRSF" id="PIRSF001174">
    <property type="entry name" value="Lon_proteas"/>
    <property type="match status" value="1"/>
</dbReference>
<dbReference type="PRINTS" id="PR00830">
    <property type="entry name" value="ENDOLAPTASE"/>
</dbReference>
<dbReference type="SMART" id="SM00382">
    <property type="entry name" value="AAA"/>
    <property type="match status" value="1"/>
</dbReference>
<dbReference type="SMART" id="SM00464">
    <property type="entry name" value="LON"/>
    <property type="match status" value="1"/>
</dbReference>
<dbReference type="SUPFAM" id="SSF52540">
    <property type="entry name" value="P-loop containing nucleoside triphosphate hydrolases"/>
    <property type="match status" value="1"/>
</dbReference>
<dbReference type="SUPFAM" id="SSF88697">
    <property type="entry name" value="PUA domain-like"/>
    <property type="match status" value="1"/>
</dbReference>
<dbReference type="SUPFAM" id="SSF54211">
    <property type="entry name" value="Ribosomal protein S5 domain 2-like"/>
    <property type="match status" value="1"/>
</dbReference>
<dbReference type="PROSITE" id="PS51787">
    <property type="entry name" value="LON_N"/>
    <property type="match status" value="1"/>
</dbReference>
<dbReference type="PROSITE" id="PS51786">
    <property type="entry name" value="LON_PROTEOLYTIC"/>
    <property type="match status" value="1"/>
</dbReference>
<dbReference type="PROSITE" id="PS01046">
    <property type="entry name" value="LON_SER"/>
    <property type="match status" value="1"/>
</dbReference>
<accession>B8BDV1</accession>
<accession>Q8GV57</accession>
<proteinExistence type="evidence at transcript level"/>
<reference key="1">
    <citation type="journal article" date="2006" name="Biotechnol. Lett.">
        <title>Molecular cloning and expression of a cDNA encoding Lon protease from rice (Oryza sativa).</title>
        <authorList>
            <person name="Su W."/>
            <person name="Lin C."/>
            <person name="Wu J."/>
            <person name="Li K."/>
            <person name="He G."/>
            <person name="Qian X."/>
            <person name="Wei C."/>
            <person name="Yang J."/>
        </authorList>
    </citation>
    <scope>NUCLEOTIDE SEQUENCE [MRNA]</scope>
    <scope>TISSUE SPECIFICITY</scope>
</reference>
<reference key="2">
    <citation type="journal article" date="2005" name="PLoS Biol.">
        <title>The genomes of Oryza sativa: a history of duplications.</title>
        <authorList>
            <person name="Yu J."/>
            <person name="Wang J."/>
            <person name="Lin W."/>
            <person name="Li S."/>
            <person name="Li H."/>
            <person name="Zhou J."/>
            <person name="Ni P."/>
            <person name="Dong W."/>
            <person name="Hu S."/>
            <person name="Zeng C."/>
            <person name="Zhang J."/>
            <person name="Zhang Y."/>
            <person name="Li R."/>
            <person name="Xu Z."/>
            <person name="Li S."/>
            <person name="Li X."/>
            <person name="Zheng H."/>
            <person name="Cong L."/>
            <person name="Lin L."/>
            <person name="Yin J."/>
            <person name="Geng J."/>
            <person name="Li G."/>
            <person name="Shi J."/>
            <person name="Liu J."/>
            <person name="Lv H."/>
            <person name="Li J."/>
            <person name="Wang J."/>
            <person name="Deng Y."/>
            <person name="Ran L."/>
            <person name="Shi X."/>
            <person name="Wang X."/>
            <person name="Wu Q."/>
            <person name="Li C."/>
            <person name="Ren X."/>
            <person name="Wang J."/>
            <person name="Wang X."/>
            <person name="Li D."/>
            <person name="Liu D."/>
            <person name="Zhang X."/>
            <person name="Ji Z."/>
            <person name="Zhao W."/>
            <person name="Sun Y."/>
            <person name="Zhang Z."/>
            <person name="Bao J."/>
            <person name="Han Y."/>
            <person name="Dong L."/>
            <person name="Ji J."/>
            <person name="Chen P."/>
            <person name="Wu S."/>
            <person name="Liu J."/>
            <person name="Xiao Y."/>
            <person name="Bu D."/>
            <person name="Tan J."/>
            <person name="Yang L."/>
            <person name="Ye C."/>
            <person name="Zhang J."/>
            <person name="Xu J."/>
            <person name="Zhou Y."/>
            <person name="Yu Y."/>
            <person name="Zhang B."/>
            <person name="Zhuang S."/>
            <person name="Wei H."/>
            <person name="Liu B."/>
            <person name="Lei M."/>
            <person name="Yu H."/>
            <person name="Li Y."/>
            <person name="Xu H."/>
            <person name="Wei S."/>
            <person name="He X."/>
            <person name="Fang L."/>
            <person name="Zhang Z."/>
            <person name="Zhang Y."/>
            <person name="Huang X."/>
            <person name="Su Z."/>
            <person name="Tong W."/>
            <person name="Li J."/>
            <person name="Tong Z."/>
            <person name="Li S."/>
            <person name="Ye J."/>
            <person name="Wang L."/>
            <person name="Fang L."/>
            <person name="Lei T."/>
            <person name="Chen C.-S."/>
            <person name="Chen H.-C."/>
            <person name="Xu Z."/>
            <person name="Li H."/>
            <person name="Huang H."/>
            <person name="Zhang F."/>
            <person name="Xu H."/>
            <person name="Li N."/>
            <person name="Zhao C."/>
            <person name="Li S."/>
            <person name="Dong L."/>
            <person name="Huang Y."/>
            <person name="Li L."/>
            <person name="Xi Y."/>
            <person name="Qi Q."/>
            <person name="Li W."/>
            <person name="Zhang B."/>
            <person name="Hu W."/>
            <person name="Zhang Y."/>
            <person name="Tian X."/>
            <person name="Jiao Y."/>
            <person name="Liang X."/>
            <person name="Jin J."/>
            <person name="Gao L."/>
            <person name="Zheng W."/>
            <person name="Hao B."/>
            <person name="Liu S.-M."/>
            <person name="Wang W."/>
            <person name="Yuan L."/>
            <person name="Cao M."/>
            <person name="McDermott J."/>
            <person name="Samudrala R."/>
            <person name="Wang J."/>
            <person name="Wong G.K.-S."/>
            <person name="Yang H."/>
        </authorList>
    </citation>
    <scope>NUCLEOTIDE SEQUENCE [LARGE SCALE GENOMIC DNA]</scope>
    <source>
        <strain>cv. 93-11</strain>
    </source>
</reference>